<protein>
    <recommendedName>
        <fullName evidence="1">DNA-directed RNA polymerase subunit omega</fullName>
        <shortName evidence="1">RNAP omega subunit</shortName>
        <ecNumber evidence="1">2.7.7.6</ecNumber>
    </recommendedName>
    <alternativeName>
        <fullName evidence="1">RNA polymerase omega subunit</fullName>
    </alternativeName>
    <alternativeName>
        <fullName evidence="1">Transcriptase subunit omega</fullName>
    </alternativeName>
</protein>
<reference key="1">
    <citation type="journal article" date="2008" name="PLoS Genet.">
        <title>Complete genome sequence of the N2-fixing broad host range endophyte Klebsiella pneumoniae 342 and virulence predictions verified in mice.</title>
        <authorList>
            <person name="Fouts D.E."/>
            <person name="Tyler H.L."/>
            <person name="DeBoy R.T."/>
            <person name="Daugherty S."/>
            <person name="Ren Q."/>
            <person name="Badger J.H."/>
            <person name="Durkin A.S."/>
            <person name="Huot H."/>
            <person name="Shrivastava S."/>
            <person name="Kothari S."/>
            <person name="Dodson R.J."/>
            <person name="Mohamoud Y."/>
            <person name="Khouri H."/>
            <person name="Roesch L.F.W."/>
            <person name="Krogfelt K.A."/>
            <person name="Struve C."/>
            <person name="Triplett E.W."/>
            <person name="Methe B.A."/>
        </authorList>
    </citation>
    <scope>NUCLEOTIDE SEQUENCE [LARGE SCALE GENOMIC DNA]</scope>
    <source>
        <strain>342</strain>
    </source>
</reference>
<accession>B5XTE8</accession>
<name>RPOZ_KLEP3</name>
<feature type="chain" id="PRO_1000121234" description="DNA-directed RNA polymerase subunit omega">
    <location>
        <begin position="1"/>
        <end position="91"/>
    </location>
</feature>
<keyword id="KW-0240">DNA-directed RNA polymerase</keyword>
<keyword id="KW-0548">Nucleotidyltransferase</keyword>
<keyword id="KW-0804">Transcription</keyword>
<keyword id="KW-0808">Transferase</keyword>
<evidence type="ECO:0000255" key="1">
    <source>
        <dbReference type="HAMAP-Rule" id="MF_00366"/>
    </source>
</evidence>
<organism>
    <name type="scientific">Klebsiella pneumoniae (strain 342)</name>
    <dbReference type="NCBI Taxonomy" id="507522"/>
    <lineage>
        <taxon>Bacteria</taxon>
        <taxon>Pseudomonadati</taxon>
        <taxon>Pseudomonadota</taxon>
        <taxon>Gammaproteobacteria</taxon>
        <taxon>Enterobacterales</taxon>
        <taxon>Enterobacteriaceae</taxon>
        <taxon>Klebsiella/Raoultella group</taxon>
        <taxon>Klebsiella</taxon>
        <taxon>Klebsiella pneumoniae complex</taxon>
    </lineage>
</organism>
<sequence>MARVTVQDAVEKIGNRFDLVLVAARRARQMQVGGKDPLVPEENDKTTVIALREIEEGLINNQILDVRERQEQQEQEAAELQAVTAIAEGRR</sequence>
<gene>
    <name evidence="1" type="primary">rpoZ</name>
    <name type="ordered locus">KPK_0099</name>
</gene>
<comment type="function">
    <text evidence="1">Promotes RNA polymerase assembly. Latches the N- and C-terminal regions of the beta' subunit thereby facilitating its interaction with the beta and alpha subunits.</text>
</comment>
<comment type="catalytic activity">
    <reaction evidence="1">
        <text>RNA(n) + a ribonucleoside 5'-triphosphate = RNA(n+1) + diphosphate</text>
        <dbReference type="Rhea" id="RHEA:21248"/>
        <dbReference type="Rhea" id="RHEA-COMP:14527"/>
        <dbReference type="Rhea" id="RHEA-COMP:17342"/>
        <dbReference type="ChEBI" id="CHEBI:33019"/>
        <dbReference type="ChEBI" id="CHEBI:61557"/>
        <dbReference type="ChEBI" id="CHEBI:140395"/>
        <dbReference type="EC" id="2.7.7.6"/>
    </reaction>
</comment>
<comment type="subunit">
    <text evidence="1">The RNAP catalytic core consists of 2 alpha, 1 beta, 1 beta' and 1 omega subunit. When a sigma factor is associated with the core the holoenzyme is formed, which can initiate transcription.</text>
</comment>
<comment type="similarity">
    <text evidence="1">Belongs to the RNA polymerase subunit omega family.</text>
</comment>
<dbReference type="EC" id="2.7.7.6" evidence="1"/>
<dbReference type="EMBL" id="CP000964">
    <property type="protein sequence ID" value="ACI11567.1"/>
    <property type="molecule type" value="Genomic_DNA"/>
</dbReference>
<dbReference type="SMR" id="B5XTE8"/>
<dbReference type="KEGG" id="kpe:KPK_0099"/>
<dbReference type="HOGENOM" id="CLU_125406_5_3_6"/>
<dbReference type="Proteomes" id="UP000001734">
    <property type="component" value="Chromosome"/>
</dbReference>
<dbReference type="GO" id="GO:0000428">
    <property type="term" value="C:DNA-directed RNA polymerase complex"/>
    <property type="evidence" value="ECO:0007669"/>
    <property type="project" value="UniProtKB-KW"/>
</dbReference>
<dbReference type="GO" id="GO:0003677">
    <property type="term" value="F:DNA binding"/>
    <property type="evidence" value="ECO:0007669"/>
    <property type="project" value="UniProtKB-UniRule"/>
</dbReference>
<dbReference type="GO" id="GO:0003899">
    <property type="term" value="F:DNA-directed RNA polymerase activity"/>
    <property type="evidence" value="ECO:0007669"/>
    <property type="project" value="UniProtKB-UniRule"/>
</dbReference>
<dbReference type="GO" id="GO:0006351">
    <property type="term" value="P:DNA-templated transcription"/>
    <property type="evidence" value="ECO:0007669"/>
    <property type="project" value="UniProtKB-UniRule"/>
</dbReference>
<dbReference type="FunFam" id="3.90.940.10:FF:000001">
    <property type="entry name" value="DNA-directed RNA polymerase subunit omega"/>
    <property type="match status" value="1"/>
</dbReference>
<dbReference type="Gene3D" id="3.90.940.10">
    <property type="match status" value="1"/>
</dbReference>
<dbReference type="HAMAP" id="MF_00366">
    <property type="entry name" value="RNApol_bact_RpoZ"/>
    <property type="match status" value="1"/>
</dbReference>
<dbReference type="InterPro" id="IPR003716">
    <property type="entry name" value="DNA-dir_RNA_pol_omega"/>
</dbReference>
<dbReference type="InterPro" id="IPR006110">
    <property type="entry name" value="Pol_omega/Rpo6/RPB6"/>
</dbReference>
<dbReference type="InterPro" id="IPR036161">
    <property type="entry name" value="RPB6/omega-like_sf"/>
</dbReference>
<dbReference type="NCBIfam" id="TIGR00690">
    <property type="entry name" value="rpoZ"/>
    <property type="match status" value="1"/>
</dbReference>
<dbReference type="PANTHER" id="PTHR34476">
    <property type="entry name" value="DNA-DIRECTED RNA POLYMERASE SUBUNIT OMEGA"/>
    <property type="match status" value="1"/>
</dbReference>
<dbReference type="PANTHER" id="PTHR34476:SF1">
    <property type="entry name" value="DNA-DIRECTED RNA POLYMERASE SUBUNIT OMEGA"/>
    <property type="match status" value="1"/>
</dbReference>
<dbReference type="Pfam" id="PF01192">
    <property type="entry name" value="RNA_pol_Rpb6"/>
    <property type="match status" value="1"/>
</dbReference>
<dbReference type="SMART" id="SM01409">
    <property type="entry name" value="RNA_pol_Rpb6"/>
    <property type="match status" value="1"/>
</dbReference>
<dbReference type="SUPFAM" id="SSF63562">
    <property type="entry name" value="RPB6/omega subunit-like"/>
    <property type="match status" value="1"/>
</dbReference>
<proteinExistence type="inferred from homology"/>